<sequence>MLILISPAKTLDYQSPLATTRYTQPELLDHSQQLIQQARQLSAPQISRLMGISDKLADLNATRFHDWQPHFTPDNARQAILAFKGDVYTGLQAETFNDADFDFAQQHLRMLSGLYGVLRPLDLMQPYRLEMGIRLENPRGKDLYQFWGDIITDKLNEALEAQGDRVVVNLASEEYFKSVKPKKLNAELIKPVFLDEKNGKFKVVSFYAKKARGLMSRFIIENRLTKPEQLTAFDREGYFFDEETSTQDELVFKRYEQ</sequence>
<comment type="similarity">
    <text evidence="1">Belongs to the UPF0246 family.</text>
</comment>
<organism>
    <name type="scientific">Salmonella typhimurium (strain LT2 / SGSC1412 / ATCC 700720)</name>
    <dbReference type="NCBI Taxonomy" id="99287"/>
    <lineage>
        <taxon>Bacteria</taxon>
        <taxon>Pseudomonadati</taxon>
        <taxon>Pseudomonadota</taxon>
        <taxon>Gammaproteobacteria</taxon>
        <taxon>Enterobacterales</taxon>
        <taxon>Enterobacteriaceae</taxon>
        <taxon>Salmonella</taxon>
    </lineage>
</organism>
<name>YAAA_SALTY</name>
<keyword id="KW-1185">Reference proteome</keyword>
<evidence type="ECO:0000255" key="1">
    <source>
        <dbReference type="HAMAP-Rule" id="MF_00652"/>
    </source>
</evidence>
<protein>
    <recommendedName>
        <fullName evidence="1">UPF0246 protein YaaA</fullName>
    </recommendedName>
</protein>
<accession>Q8ZS17</accession>
<proteinExistence type="inferred from homology"/>
<dbReference type="EMBL" id="AE006468">
    <property type="protein sequence ID" value="AAL18969.1"/>
    <property type="molecule type" value="Genomic_DNA"/>
</dbReference>
<dbReference type="RefSeq" id="NP_459010.1">
    <property type="nucleotide sequence ID" value="NC_003197.2"/>
</dbReference>
<dbReference type="RefSeq" id="WP_000906175.1">
    <property type="nucleotide sequence ID" value="NC_003197.2"/>
</dbReference>
<dbReference type="SMR" id="Q8ZS17"/>
<dbReference type="STRING" id="99287.STM0005"/>
<dbReference type="PaxDb" id="99287-STM0005"/>
<dbReference type="GeneID" id="1251523"/>
<dbReference type="KEGG" id="stm:STM0005"/>
<dbReference type="PATRIC" id="fig|99287.12.peg.4"/>
<dbReference type="HOGENOM" id="CLU_061989_0_0_6"/>
<dbReference type="OMA" id="WKNGQYK"/>
<dbReference type="PhylomeDB" id="Q8ZS17"/>
<dbReference type="BioCyc" id="SENT99287:STM0005-MONOMER"/>
<dbReference type="Proteomes" id="UP000001014">
    <property type="component" value="Chromosome"/>
</dbReference>
<dbReference type="GO" id="GO:0005829">
    <property type="term" value="C:cytosol"/>
    <property type="evidence" value="ECO:0000318"/>
    <property type="project" value="GO_Central"/>
</dbReference>
<dbReference type="GO" id="GO:0033194">
    <property type="term" value="P:response to hydroperoxide"/>
    <property type="evidence" value="ECO:0000318"/>
    <property type="project" value="GO_Central"/>
</dbReference>
<dbReference type="HAMAP" id="MF_00652">
    <property type="entry name" value="UPF0246"/>
    <property type="match status" value="1"/>
</dbReference>
<dbReference type="InterPro" id="IPR005583">
    <property type="entry name" value="YaaA"/>
</dbReference>
<dbReference type="NCBIfam" id="NF002541">
    <property type="entry name" value="PRK02101.1-1"/>
    <property type="match status" value="1"/>
</dbReference>
<dbReference type="NCBIfam" id="NF002542">
    <property type="entry name" value="PRK02101.1-3"/>
    <property type="match status" value="1"/>
</dbReference>
<dbReference type="PANTHER" id="PTHR30283:SF4">
    <property type="entry name" value="PEROXIDE STRESS RESISTANCE PROTEIN YAAA"/>
    <property type="match status" value="1"/>
</dbReference>
<dbReference type="PANTHER" id="PTHR30283">
    <property type="entry name" value="PEROXIDE STRESS RESPONSE PROTEIN YAAA"/>
    <property type="match status" value="1"/>
</dbReference>
<dbReference type="Pfam" id="PF03883">
    <property type="entry name" value="H2O2_YaaD"/>
    <property type="match status" value="1"/>
</dbReference>
<feature type="chain" id="PRO_0000204002" description="UPF0246 protein YaaA">
    <location>
        <begin position="1"/>
        <end position="257"/>
    </location>
</feature>
<reference key="1">
    <citation type="journal article" date="2001" name="Nature">
        <title>Complete genome sequence of Salmonella enterica serovar Typhimurium LT2.</title>
        <authorList>
            <person name="McClelland M."/>
            <person name="Sanderson K.E."/>
            <person name="Spieth J."/>
            <person name="Clifton S.W."/>
            <person name="Latreille P."/>
            <person name="Courtney L."/>
            <person name="Porwollik S."/>
            <person name="Ali J."/>
            <person name="Dante M."/>
            <person name="Du F."/>
            <person name="Hou S."/>
            <person name="Layman D."/>
            <person name="Leonard S."/>
            <person name="Nguyen C."/>
            <person name="Scott K."/>
            <person name="Holmes A."/>
            <person name="Grewal N."/>
            <person name="Mulvaney E."/>
            <person name="Ryan E."/>
            <person name="Sun H."/>
            <person name="Florea L."/>
            <person name="Miller W."/>
            <person name="Stoneking T."/>
            <person name="Nhan M."/>
            <person name="Waterston R."/>
            <person name="Wilson R.K."/>
        </authorList>
    </citation>
    <scope>NUCLEOTIDE SEQUENCE [LARGE SCALE GENOMIC DNA]</scope>
    <source>
        <strain>LT2 / SGSC1412 / ATCC 700720</strain>
    </source>
</reference>
<gene>
    <name evidence="1" type="primary">yaaA</name>
    <name type="ordered locus">STM0005</name>
</gene>